<protein>
    <recommendedName>
        <fullName>Cruciferin</fullName>
    </recommendedName>
    <alternativeName>
        <fullName>11S globulin</fullName>
    </alternativeName>
    <alternativeName>
        <fullName>12S storage protein</fullName>
    </alternativeName>
    <allergenName>Sin a 2</allergenName>
    <component>
        <recommendedName>
            <fullName>Cruciferin alpha chain</fullName>
        </recommendedName>
    </component>
    <component>
        <recommendedName>
            <fullName>Cruciferin beta chain</fullName>
        </recommendedName>
    </component>
</protein>
<accession>P83908</accession>
<organism>
    <name type="scientific">Sinapis alba</name>
    <name type="common">White mustard</name>
    <name type="synonym">Brassica hirta</name>
    <dbReference type="NCBI Taxonomy" id="3728"/>
    <lineage>
        <taxon>Eukaryota</taxon>
        <taxon>Viridiplantae</taxon>
        <taxon>Streptophyta</taxon>
        <taxon>Embryophyta</taxon>
        <taxon>Tracheophyta</taxon>
        <taxon>Spermatophyta</taxon>
        <taxon>Magnoliopsida</taxon>
        <taxon>eudicotyledons</taxon>
        <taxon>Gunneridae</taxon>
        <taxon>Pentapetalae</taxon>
        <taxon>rosids</taxon>
        <taxon>malvids</taxon>
        <taxon>Brassicales</taxon>
        <taxon>Brassicaceae</taxon>
        <taxon>Brassiceae</taxon>
        <taxon>Sinapis</taxon>
    </lineage>
</organism>
<proteinExistence type="evidence at protein level"/>
<feature type="chain" id="PRO_0000032042" description="Cruciferin alpha chain" evidence="2">
    <location>
        <begin position="1"/>
        <end position="22" status="greater than"/>
    </location>
</feature>
<feature type="chain" id="PRO_0000032043" description="Cruciferin beta chain" evidence="2">
    <location>
        <begin position="23" status="less than"/>
        <end position="56" status="greater than"/>
    </location>
</feature>
<feature type="modified residue" description="Phosphothreonine" evidence="1">
    <location>
        <position position="45"/>
    </location>
</feature>
<feature type="non-consecutive residues" evidence="5">
    <location>
        <begin position="9"/>
        <end position="10"/>
    </location>
</feature>
<feature type="non-consecutive residues" evidence="5">
    <location>
        <begin position="22"/>
        <end position="23"/>
    </location>
</feature>
<feature type="non-consecutive residues" evidence="5">
    <location>
        <begin position="37"/>
        <end position="38"/>
    </location>
</feature>
<feature type="non-terminal residue" evidence="5">
    <location>
        <position position="56"/>
    </location>
</feature>
<reference evidence="6" key="1">
    <citation type="journal article" date="2005" name="Ann. Allergy Asthma Immunol.">
        <title>Isolation and identification of an 11S globulin as a new major allergen in mustard seeds.</title>
        <authorList>
            <person name="Palomares O."/>
            <person name="Cuesta-Herranz J."/>
            <person name="Vereda A."/>
            <person name="Sirvent S."/>
            <person name="Villalba M."/>
            <person name="Rodriguez R."/>
        </authorList>
    </citation>
    <scope>PROTEIN SEQUENCE</scope>
    <scope>ALLERGEN</scope>
    <source>
        <tissue evidence="4">Seed</tissue>
    </source>
</reference>
<evidence type="ECO:0000250" key="1">
    <source>
        <dbReference type="UniProtKB" id="P15456"/>
    </source>
</evidence>
<evidence type="ECO:0000250" key="2">
    <source>
        <dbReference type="UniProtKB" id="Q02498"/>
    </source>
</evidence>
<evidence type="ECO:0000255" key="3"/>
<evidence type="ECO:0000269" key="4">
    <source>
    </source>
</evidence>
<evidence type="ECO:0000303" key="5">
    <source>
    </source>
</evidence>
<evidence type="ECO:0000305" key="6"/>
<sequence length="56" mass="6302">RQSLGVPPQVKGPFQVVRPPLRTSVNSYTLPILQYIRALPLEVITNAFQISLEEAR</sequence>
<keyword id="KW-0020">Allergen</keyword>
<keyword id="KW-0903">Direct protein sequencing</keyword>
<keyword id="KW-1015">Disulfide bond</keyword>
<keyword id="KW-0597">Phosphoprotein</keyword>
<keyword id="KW-0708">Seed storage protein</keyword>
<keyword id="KW-0758">Storage protein</keyword>
<comment type="function">
    <text evidence="6">This is a seed storage protein.</text>
</comment>
<comment type="subunit">
    <text evidence="6">Hexamer; each subunit is composed of an acidic and a basic chain derived from a single precursor and linked by a disulfide bond.</text>
</comment>
<comment type="allergen">
    <text evidence="4">Causes an allergic reaction in human. Binds to IgE.</text>
</comment>
<comment type="similarity">
    <text evidence="3">Belongs to the 11S seed storage protein (globulins) family.</text>
</comment>
<dbReference type="SMR" id="P83908"/>
<dbReference type="Allergome" id="2693">
    <property type="allergen name" value="Sin a 2"/>
</dbReference>
<dbReference type="GO" id="GO:0045735">
    <property type="term" value="F:nutrient reservoir activity"/>
    <property type="evidence" value="ECO:0007669"/>
    <property type="project" value="UniProtKB-KW"/>
</dbReference>
<name>CRU1_SINAL</name>